<gene>
    <name type="primary">CHS</name>
    <name type="synonym">TT4</name>
    <name type="ordered locus">At5g13930</name>
    <name type="ORF">MAC12.11</name>
    <name type="ORF">MAC12.14</name>
</gene>
<feature type="initiator methionine" description="Removed" evidence="3">
    <location>
        <position position="1"/>
    </location>
</feature>
<feature type="chain" id="PRO_0000215954" description="Chalcone synthase">
    <location>
        <begin position="2"/>
        <end position="395"/>
    </location>
</feature>
<feature type="active site" evidence="1">
    <location>
        <position position="169"/>
    </location>
</feature>
<feature type="modified residue" description="N-acetylvaline" evidence="3">
    <location>
        <position position="2"/>
    </location>
</feature>
<feature type="splice variant" id="VSP_057945" description="In isoform 2." evidence="2">
    <location>
        <begin position="1"/>
        <end position="2"/>
    </location>
</feature>
<feature type="mutagenesis site" description="In JK196.">
    <original>H</original>
    <variation>Y</variation>
    <location>
        <position position="309"/>
    </location>
</feature>
<feature type="sequence conflict" description="In Ref. 7; AAL06937." evidence="2" ref="7">
    <original>P</original>
    <variation>H</variation>
    <location>
        <position position="42"/>
    </location>
</feature>
<feature type="sequence conflict" description="In Ref. 7; AAL06937." evidence="2" ref="7">
    <original>M</original>
    <variation>K</variation>
    <location>
        <position position="54"/>
    </location>
</feature>
<feature type="sequence conflict" description="In Ref. 2; AAB35812." evidence="2" ref="2">
    <original>G</original>
    <variation>S</variation>
    <location>
        <position position="268"/>
    </location>
</feature>
<feature type="sequence conflict" description="In Ref. 7; AAL06937." evidence="2" ref="7">
    <original>L</original>
    <variation>S</variation>
    <location>
        <position position="376"/>
    </location>
</feature>
<feature type="sequence conflict" description="In Ref. 7; AAL06937." evidence="2" ref="7">
    <original>T</original>
    <variation>S</variation>
    <location>
        <position position="384"/>
    </location>
</feature>
<feature type="helix" evidence="4">
    <location>
        <begin position="9"/>
        <end position="16"/>
    </location>
</feature>
<feature type="strand" evidence="4">
    <location>
        <begin position="23"/>
        <end position="30"/>
    </location>
</feature>
<feature type="strand" evidence="4">
    <location>
        <begin position="35"/>
        <end position="37"/>
    </location>
</feature>
<feature type="helix" evidence="4">
    <location>
        <begin position="38"/>
        <end position="40"/>
    </location>
</feature>
<feature type="helix" evidence="4">
    <location>
        <begin position="41"/>
        <end position="48"/>
    </location>
</feature>
<feature type="helix" evidence="4">
    <location>
        <begin position="55"/>
        <end position="67"/>
    </location>
</feature>
<feature type="strand" evidence="4">
    <location>
        <begin position="72"/>
        <end position="74"/>
    </location>
</feature>
<feature type="helix" evidence="4">
    <location>
        <begin position="79"/>
        <end position="84"/>
    </location>
</feature>
<feature type="helix" evidence="4">
    <location>
        <begin position="86"/>
        <end position="88"/>
    </location>
</feature>
<feature type="strand" evidence="4">
    <location>
        <begin position="90"/>
        <end position="92"/>
    </location>
</feature>
<feature type="helix" evidence="4">
    <location>
        <begin position="96"/>
        <end position="122"/>
    </location>
</feature>
<feature type="helix" evidence="4">
    <location>
        <begin position="126"/>
        <end position="128"/>
    </location>
</feature>
<feature type="strand" evidence="4">
    <location>
        <begin position="131"/>
        <end position="138"/>
    </location>
</feature>
<feature type="strand" evidence="4">
    <location>
        <begin position="141"/>
        <end position="143"/>
    </location>
</feature>
<feature type="helix" evidence="4">
    <location>
        <begin position="145"/>
        <end position="153"/>
    </location>
</feature>
<feature type="strand" evidence="4">
    <location>
        <begin position="160"/>
        <end position="166"/>
    </location>
</feature>
<feature type="helix" evidence="4">
    <location>
        <begin position="171"/>
        <end position="184"/>
    </location>
</feature>
<feature type="strand" evidence="4">
    <location>
        <begin position="190"/>
        <end position="197"/>
    </location>
</feature>
<feature type="helix" evidence="4">
    <location>
        <begin position="199"/>
        <end position="201"/>
    </location>
</feature>
<feature type="helix" evidence="4">
    <location>
        <begin position="211"/>
        <end position="219"/>
    </location>
</feature>
<feature type="strand" evidence="4">
    <location>
        <begin position="223"/>
        <end position="232"/>
    </location>
</feature>
<feature type="helix" evidence="4">
    <location>
        <begin position="235"/>
        <end position="237"/>
    </location>
</feature>
<feature type="strand" evidence="4">
    <location>
        <begin position="242"/>
        <end position="252"/>
    </location>
</feature>
<feature type="strand" evidence="4">
    <location>
        <begin position="259"/>
        <end position="265"/>
    </location>
</feature>
<feature type="strand" evidence="4">
    <location>
        <begin position="268"/>
        <end position="273"/>
    </location>
</feature>
<feature type="helix" evidence="4">
    <location>
        <begin position="277"/>
        <end position="293"/>
    </location>
</feature>
<feature type="helix" evidence="4">
    <location>
        <begin position="294"/>
        <end position="296"/>
    </location>
</feature>
<feature type="helix" evidence="4">
    <location>
        <begin position="301"/>
        <end position="303"/>
    </location>
</feature>
<feature type="strand" evidence="4">
    <location>
        <begin position="304"/>
        <end position="308"/>
    </location>
</feature>
<feature type="helix" evidence="4">
    <location>
        <begin position="313"/>
        <end position="323"/>
    </location>
</feature>
<feature type="helix" evidence="4">
    <location>
        <begin position="327"/>
        <end position="330"/>
    </location>
</feature>
<feature type="helix" evidence="4">
    <location>
        <begin position="331"/>
        <end position="340"/>
    </location>
</feature>
<feature type="helix" evidence="4">
    <location>
        <begin position="344"/>
        <end position="346"/>
    </location>
</feature>
<feature type="helix" evidence="4">
    <location>
        <begin position="347"/>
        <end position="362"/>
    </location>
</feature>
<feature type="turn" evidence="4">
    <location>
        <begin position="367"/>
        <end position="370"/>
    </location>
</feature>
<feature type="strand" evidence="4">
    <location>
        <begin position="372"/>
        <end position="380"/>
    </location>
</feature>
<feature type="turn" evidence="4">
    <location>
        <begin position="381"/>
        <end position="383"/>
    </location>
</feature>
<feature type="strand" evidence="4">
    <location>
        <begin position="384"/>
        <end position="392"/>
    </location>
</feature>
<feature type="initiator methionine" description="Removed" evidence="3">
    <location sequence="P13114-2">
        <position position="1"/>
    </location>
</feature>
<feature type="modified residue" description="N-acetylalanine" evidence="3">
    <location sequence="P13114-2">
        <position position="2"/>
    </location>
</feature>
<comment type="function">
    <text>The primary product of this enzyme is 4,2',4',6'-tetrahydroxychalcone (also termed naringenin-chalcone or chalcone) which can under specific conditions spontaneously isomerize into naringenin.</text>
</comment>
<comment type="catalytic activity">
    <reaction evidence="1">
        <text>(E)-4-coumaroyl-CoA + 3 malonyl-CoA + 3 H(+) = 2',4,4',6'-tetrahydroxychalcone + 3 CO2 + 4 CoA</text>
        <dbReference type="Rhea" id="RHEA:11128"/>
        <dbReference type="ChEBI" id="CHEBI:15378"/>
        <dbReference type="ChEBI" id="CHEBI:15413"/>
        <dbReference type="ChEBI" id="CHEBI:16526"/>
        <dbReference type="ChEBI" id="CHEBI:57287"/>
        <dbReference type="ChEBI" id="CHEBI:57384"/>
        <dbReference type="ChEBI" id="CHEBI:85008"/>
        <dbReference type="EC" id="2.3.1.74"/>
    </reaction>
</comment>
<comment type="pathway">
    <text>Secondary metabolite biosynthesis; flavonoid biosynthesis.</text>
</comment>
<comment type="interaction">
    <interactant intactId="EBI-1546775">
        <id>P13114</id>
    </interactant>
    <interactant intactId="EBI-3946783">
        <id>Q9C5W9</id>
        <label>ARF18</label>
    </interactant>
    <organismsDiffer>false</organismsDiffer>
    <experiments>3</experiments>
</comment>
<comment type="interaction">
    <interactant intactId="EBI-1546775">
        <id>P13114</id>
    </interactant>
    <interactant intactId="EBI-1546761">
        <id>P41088</id>
        <label>CHI1</label>
    </interactant>
    <organismsDiffer>false</organismsDiffer>
    <experiments>4</experiments>
</comment>
<comment type="interaction">
    <interactant intactId="EBI-1546775">
        <id>P13114</id>
    </interactant>
    <interactant intactId="EBI-1546795">
        <id>P51102</id>
        <label>DFRA</label>
    </interactant>
    <organismsDiffer>false</organismsDiffer>
    <experiments>4</experiments>
</comment>
<comment type="interaction">
    <interactant intactId="EBI-1546775">
        <id>P13114</id>
    </interactant>
    <interactant intactId="EBI-1774454">
        <id>Q96330</id>
        <label>FLS1</label>
    </interactant>
    <organismsDiffer>false</organismsDiffer>
    <experiments>3</experiments>
</comment>
<comment type="alternative products">
    <event type="alternative initiation"/>
    <isoform>
        <id>P13114-1</id>
        <name>1</name>
        <sequence type="displayed"/>
    </isoform>
    <isoform>
        <id>P13114-2</id>
        <name>2</name>
        <sequence type="described" ref="VSP_057945"/>
    </isoform>
</comment>
<comment type="similarity">
    <text evidence="2">Belongs to the thiolase-like superfamily. Chalcone/stilbene synthases family.</text>
</comment>
<sequence length="395" mass="43116">MVMAGASSLDEIRQAQRADGPAGILAIGTANPENHVLQAEYPDYYFRITNSEHMTDLKEKFKRMCDKSTIRKRHMHLTEEFLKENPHMCAYMAPSLDTRQDIVVVEVPKLGKEAAVKAIKEWGQPKSKITHVVFCTTSGVDMPGADYQLTKLLGLRPSVKRLMMYQQGCFAGGTVLRIAKDLAENNRGARVLVVCSEITAVTFRGPSDTHLDSLVGQALFSDGAAALIVGSDPDTSVGEKPIFEMVSAAQTILPDSDGAIDGHLREVGLTFHLLKDVPGLISKNIVKSLDEAFKPLGISDWNSLFWIAHPGGPAILDQVEIKLGLKEEKMRATRHVLSEYGNMSSACVLFILDEMRRKSAKDGVATTGEGLEWGVLFGFGPGLTVETVVLHSVPL</sequence>
<protein>
    <recommendedName>
        <fullName>Chalcone synthase</fullName>
        <ecNumber>2.3.1.74</ecNumber>
    </recommendedName>
    <alternativeName>
        <fullName>Naringenin-chalcone synthase</fullName>
    </alternativeName>
    <alternativeName>
        <fullName>Protein TRANSPARENT TESTA 4</fullName>
    </alternativeName>
</protein>
<reference key="1">
    <citation type="journal article" date="1988" name="Mol. Cell. Biol.">
        <title>Transcriptional regulation of the Arabidopsis thaliana chalcone synthase gene.</title>
        <authorList>
            <person name="Feinbaum R.L."/>
            <person name="Ausubel F.M."/>
        </authorList>
    </citation>
    <scope>NUCLEOTIDE SEQUENCE [GENOMIC DNA]</scope>
</reference>
<reference key="2">
    <citation type="journal article" date="1995" name="Plant J.">
        <title>Analysis of Arabidopsis mutants deficient in flavonoid biosynthesis.</title>
        <authorList>
            <person name="Shirley B.W."/>
            <person name="Kubasek W.L."/>
            <person name="Storz G."/>
            <person name="Bruggemann E."/>
            <person name="Koornneef M."/>
            <person name="Ausubel F.M."/>
            <person name="Goodman H.M."/>
        </authorList>
    </citation>
    <scope>NUCLEOTIDE SEQUENCE [GENOMIC DNA]</scope>
    <source>
        <strain>cv. Landsberg erecta</strain>
    </source>
</reference>
<reference key="3">
    <citation type="submission" date="1999-01" db="EMBL/GenBank/DDBJ databases">
        <title>Physiological and molecular characterization of transparent testa mutants of Arabidopsis impaired in phenylpropanoid pathway.</title>
        <authorList>
            <person name="Bharti A.K."/>
            <person name="Tyagi A.K."/>
            <person name="Khurana J.P."/>
        </authorList>
    </citation>
    <scope>NUCLEOTIDE SEQUENCE [GENOMIC DNA]</scope>
    <scope>MUTANT JK196</scope>
    <source>
        <strain>cv. Est</strain>
    </source>
</reference>
<reference key="4">
    <citation type="journal article" date="2000" name="Mol. Biol. Evol.">
        <title>Comparative evolutionary analysis of chalcone synthase and alcohol dehydrogenase loci in Arabidopsis, Arabis, and related genera (Brassicaceae).</title>
        <authorList>
            <person name="Koch M.A."/>
            <person name="Haubold B."/>
            <person name="Mitchell-Olds T."/>
        </authorList>
    </citation>
    <scope>NUCLEOTIDE SEQUENCE [GENOMIC DNA]</scope>
</reference>
<reference key="5">
    <citation type="journal article" date="1997" name="DNA Res.">
        <title>Structural analysis of Arabidopsis thaliana chromosome 5. I. Sequence features of the 1.6 Mb regions covered by twenty physically assigned P1 clones.</title>
        <authorList>
            <person name="Sato S."/>
            <person name="Kotani H."/>
            <person name="Nakamura Y."/>
            <person name="Kaneko T."/>
            <person name="Asamizu E."/>
            <person name="Fukami M."/>
            <person name="Miyajima N."/>
            <person name="Tabata S."/>
        </authorList>
    </citation>
    <scope>NUCLEOTIDE SEQUENCE [LARGE SCALE GENOMIC DNA]</scope>
    <source>
        <strain>cv. Columbia</strain>
    </source>
</reference>
<reference key="6">
    <citation type="journal article" date="2017" name="Plant J.">
        <title>Araport11: a complete reannotation of the Arabidopsis thaliana reference genome.</title>
        <authorList>
            <person name="Cheng C.Y."/>
            <person name="Krishnakumar V."/>
            <person name="Chan A.P."/>
            <person name="Thibaud-Nissen F."/>
            <person name="Schobel S."/>
            <person name="Town C.D."/>
        </authorList>
    </citation>
    <scope>GENOME REANNOTATION</scope>
    <source>
        <strain>cv. Columbia</strain>
    </source>
</reference>
<reference key="7">
    <citation type="journal article" date="2003" name="Science">
        <title>Empirical analysis of transcriptional activity in the Arabidopsis genome.</title>
        <authorList>
            <person name="Yamada K."/>
            <person name="Lim J."/>
            <person name="Dale J.M."/>
            <person name="Chen H."/>
            <person name="Shinn P."/>
            <person name="Palm C.J."/>
            <person name="Southwick A.M."/>
            <person name="Wu H.C."/>
            <person name="Kim C.J."/>
            <person name="Nguyen M."/>
            <person name="Pham P.K."/>
            <person name="Cheuk R.F."/>
            <person name="Karlin-Newmann G."/>
            <person name="Liu S.X."/>
            <person name="Lam B."/>
            <person name="Sakano H."/>
            <person name="Wu T."/>
            <person name="Yu G."/>
            <person name="Miranda M."/>
            <person name="Quach H.L."/>
            <person name="Tripp M."/>
            <person name="Chang C.H."/>
            <person name="Lee J.M."/>
            <person name="Toriumi M.J."/>
            <person name="Chan M.M."/>
            <person name="Tang C.C."/>
            <person name="Onodera C.S."/>
            <person name="Deng J.M."/>
            <person name="Akiyama K."/>
            <person name="Ansari Y."/>
            <person name="Arakawa T."/>
            <person name="Banh J."/>
            <person name="Banno F."/>
            <person name="Bowser L."/>
            <person name="Brooks S.Y."/>
            <person name="Carninci P."/>
            <person name="Chao Q."/>
            <person name="Choy N."/>
            <person name="Enju A."/>
            <person name="Goldsmith A.D."/>
            <person name="Gurjal M."/>
            <person name="Hansen N.F."/>
            <person name="Hayashizaki Y."/>
            <person name="Johnson-Hopson C."/>
            <person name="Hsuan V.W."/>
            <person name="Iida K."/>
            <person name="Karnes M."/>
            <person name="Khan S."/>
            <person name="Koesema E."/>
            <person name="Ishida J."/>
            <person name="Jiang P.X."/>
            <person name="Jones T."/>
            <person name="Kawai J."/>
            <person name="Kamiya A."/>
            <person name="Meyers C."/>
            <person name="Nakajima M."/>
            <person name="Narusaka M."/>
            <person name="Seki M."/>
            <person name="Sakurai T."/>
            <person name="Satou M."/>
            <person name="Tamse R."/>
            <person name="Vaysberg M."/>
            <person name="Wallender E.K."/>
            <person name="Wong C."/>
            <person name="Yamamura Y."/>
            <person name="Yuan S."/>
            <person name="Shinozaki K."/>
            <person name="Davis R.W."/>
            <person name="Theologis A."/>
            <person name="Ecker J.R."/>
        </authorList>
    </citation>
    <scope>NUCLEOTIDE SEQUENCE [LARGE SCALE MRNA] (ISOFORM 1)</scope>
    <source>
        <strain>cv. Columbia</strain>
    </source>
</reference>
<reference key="8">
    <citation type="submission" date="2002-03" db="EMBL/GenBank/DDBJ databases">
        <title>Full-length cDNA from Arabidopsis thaliana.</title>
        <authorList>
            <person name="Brover V.V."/>
            <person name="Troukhan M.E."/>
            <person name="Alexandrov N.A."/>
            <person name="Lu Y.-P."/>
            <person name="Flavell R.B."/>
            <person name="Feldmann K.A."/>
        </authorList>
    </citation>
    <scope>NUCLEOTIDE SEQUENCE [LARGE SCALE MRNA] (ISOFORM 2)</scope>
</reference>
<reference key="9">
    <citation type="journal article" date="1993" name="Plant J.">
        <title>An inventory of 1152 expressed sequence tags obtained by partial sequencing of cDNAs from Arabidopsis thaliana.</title>
        <authorList>
            <person name="Hoefte H."/>
            <person name="Desprez T."/>
            <person name="Amselem J."/>
            <person name="Chiapello H."/>
            <person name="Rouze P."/>
            <person name="Caboche M."/>
            <person name="Moisan A."/>
            <person name="Jourjon M.-F."/>
            <person name="Charpenteau J.-L."/>
            <person name="Berthomieu P."/>
            <person name="Guerrier D."/>
            <person name="Giraudat J."/>
            <person name="Quigley F."/>
            <person name="Thomas F."/>
            <person name="Yu D.-Y."/>
            <person name="Mache R."/>
            <person name="Raynal M."/>
            <person name="Cooke R."/>
            <person name="Grellet F."/>
            <person name="Delseny M."/>
            <person name="Parmentier Y."/>
            <person name="de Marcillac G."/>
            <person name="Gigot C."/>
            <person name="Fleck J."/>
            <person name="Philipps G."/>
            <person name="Axelos M."/>
            <person name="Bardet C."/>
            <person name="Tremousaygue D."/>
            <person name="Lescure B."/>
        </authorList>
    </citation>
    <scope>NUCLEOTIDE SEQUENCE [LARGE SCALE MRNA] OF 81-205 AND 348-395</scope>
    <source>
        <strain>cv. Columbia</strain>
        <tissue>Green siliques</tissue>
    </source>
</reference>
<reference key="10">
    <citation type="journal article" date="2012" name="Mol. Cell. Proteomics">
        <title>Comparative large-scale characterisation of plant vs. mammal proteins reveals similar and idiosyncratic N-alpha acetylation features.</title>
        <authorList>
            <person name="Bienvenut W.V."/>
            <person name="Sumpton D."/>
            <person name="Martinez A."/>
            <person name="Lilla S."/>
            <person name="Espagne C."/>
            <person name="Meinnel T."/>
            <person name="Giglione C."/>
        </authorList>
    </citation>
    <scope>ACETYLATION [LARGE SCALE ANALYSIS] AT VAL-2</scope>
    <scope>ACETYLATION [LARGE SCALE ANALYSIS] AT ALA-2 (ISOFORM 2)</scope>
    <scope>CLEAVAGE OF INITIATOR METHIONINE [LARGE SCALE ANALYSIS]</scope>
    <scope>CLEAVAGE OF INITIATOR METHIONINE [LARGE SCALE ANALYSIS] (ISOFORM 2)</scope>
    <scope>IDENTIFICATION BY MASS SPECTROMETRY [LARGE SCALE ANALYSIS]</scope>
</reference>
<reference key="11">
    <citation type="journal article" date="2013" name="Plant Physiol. Biochem.">
        <title>The flavonoid biosynthetic pathway in Arabidopsis: Structural and genetic diversity.</title>
        <authorList>
            <person name="Saito K."/>
            <person name="Yonekura-Sakakibara K."/>
            <person name="Nakabayashi R."/>
            <person name="Higashi Y."/>
            <person name="Yamazaki M."/>
            <person name="Tohge T."/>
            <person name="Fernie A.R."/>
        </authorList>
    </citation>
    <scope>REVIEW</scope>
    <scope>NOMENCLATURE</scope>
</reference>
<evidence type="ECO:0000255" key="1">
    <source>
        <dbReference type="PROSITE-ProRule" id="PRU10023"/>
    </source>
</evidence>
<evidence type="ECO:0000305" key="2"/>
<evidence type="ECO:0007744" key="3">
    <source>
    </source>
</evidence>
<evidence type="ECO:0007829" key="4">
    <source>
        <dbReference type="PDB" id="6DXB"/>
    </source>
</evidence>
<dbReference type="EC" id="2.3.1.74"/>
<dbReference type="EMBL" id="M20308">
    <property type="protein sequence ID" value="AAA32771.1"/>
    <property type="molecule type" value="Genomic_DNA"/>
</dbReference>
<dbReference type="EMBL" id="S80554">
    <property type="protein sequence ID" value="AAB35812.1"/>
    <property type="molecule type" value="Genomic_DNA"/>
</dbReference>
<dbReference type="EMBL" id="Y18602">
    <property type="protein sequence ID" value="CAC80089.1"/>
    <property type="molecule type" value="Genomic_DNA"/>
</dbReference>
<dbReference type="EMBL" id="Y18603">
    <property type="protein sequence ID" value="CAC80090.1"/>
    <property type="molecule type" value="Genomic_DNA"/>
</dbReference>
<dbReference type="EMBL" id="AF112086">
    <property type="protein sequence ID" value="AAF23561.1"/>
    <property type="molecule type" value="Genomic_DNA"/>
</dbReference>
<dbReference type="EMBL" id="AB005230">
    <property type="protein sequence ID" value="BAB11121.1"/>
    <property type="molecule type" value="Genomic_DNA"/>
</dbReference>
<dbReference type="EMBL" id="CP002688">
    <property type="protein sequence ID" value="AED91961.1"/>
    <property type="molecule type" value="Genomic_DNA"/>
</dbReference>
<dbReference type="EMBL" id="AY044331">
    <property type="protein sequence ID" value="AAK73272.1"/>
    <property type="molecule type" value="mRNA"/>
</dbReference>
<dbReference type="EMBL" id="AY054278">
    <property type="protein sequence ID" value="AAL06937.1"/>
    <property type="molecule type" value="mRNA"/>
</dbReference>
<dbReference type="EMBL" id="AY058155">
    <property type="protein sequence ID" value="AAL25571.1"/>
    <property type="molecule type" value="mRNA"/>
</dbReference>
<dbReference type="EMBL" id="AY090376">
    <property type="protein sequence ID" value="AAL91279.1"/>
    <property type="molecule type" value="mRNA"/>
</dbReference>
<dbReference type="EMBL" id="AY087778">
    <property type="protein sequence ID" value="AAM65314.1"/>
    <property type="molecule type" value="mRNA"/>
</dbReference>
<dbReference type="EMBL" id="BT000596">
    <property type="protein sequence ID" value="AAN18165.1"/>
    <property type="molecule type" value="mRNA"/>
</dbReference>
<dbReference type="EMBL" id="Z17650">
    <property type="protein sequence ID" value="CAA79023.1"/>
    <property type="molecule type" value="mRNA"/>
</dbReference>
<dbReference type="EMBL" id="Z17649">
    <property type="protein sequence ID" value="CAA79022.1"/>
    <property type="molecule type" value="mRNA"/>
</dbReference>
<dbReference type="PIR" id="A27721">
    <property type="entry name" value="SYMUCN"/>
</dbReference>
<dbReference type="RefSeq" id="NP_196897.1">
    <molecule id="P13114-1"/>
    <property type="nucleotide sequence ID" value="NM_121396.4"/>
</dbReference>
<dbReference type="PDB" id="6DXB">
    <property type="method" value="X-ray"/>
    <property type="resolution" value="1.55 A"/>
    <property type="chains" value="A/B/C/D=1-395"/>
</dbReference>
<dbReference type="PDB" id="6DXD">
    <property type="method" value="X-ray"/>
    <property type="resolution" value="1.59 A"/>
    <property type="chains" value="A/B/C/D=1-395"/>
</dbReference>
<dbReference type="PDB" id="6DXE">
    <property type="method" value="X-ray"/>
    <property type="resolution" value="1.61 A"/>
    <property type="chains" value="A/C=1-395"/>
</dbReference>
<dbReference type="PDBsum" id="6DXB"/>
<dbReference type="PDBsum" id="6DXD"/>
<dbReference type="PDBsum" id="6DXE"/>
<dbReference type="SMR" id="P13114"/>
<dbReference type="BioGRID" id="16519">
    <property type="interactions" value="11"/>
</dbReference>
<dbReference type="FunCoup" id="P13114">
    <property type="interactions" value="64"/>
</dbReference>
<dbReference type="IntAct" id="P13114">
    <property type="interactions" value="8"/>
</dbReference>
<dbReference type="MINT" id="P13114"/>
<dbReference type="STRING" id="3702.P13114"/>
<dbReference type="iPTMnet" id="P13114"/>
<dbReference type="PaxDb" id="3702-AT5G13930.1"/>
<dbReference type="ProteomicsDB" id="246835">
    <molecule id="P13114-1"/>
</dbReference>
<dbReference type="EnsemblPlants" id="AT5G13930.1">
    <molecule id="P13114-1"/>
    <property type="protein sequence ID" value="AT5G13930.1"/>
    <property type="gene ID" value="AT5G13930"/>
</dbReference>
<dbReference type="GeneID" id="831241"/>
<dbReference type="Gramene" id="AT5G13930.1">
    <molecule id="P13114-1"/>
    <property type="protein sequence ID" value="AT5G13930.1"/>
    <property type="gene ID" value="AT5G13930"/>
</dbReference>
<dbReference type="KEGG" id="ath:AT5G13930"/>
<dbReference type="Araport" id="AT5G13930"/>
<dbReference type="TAIR" id="AT5G13930">
    <property type="gene designation" value="TT4"/>
</dbReference>
<dbReference type="eggNOG" id="ENOG502S4A6">
    <property type="taxonomic scope" value="Eukaryota"/>
</dbReference>
<dbReference type="HOGENOM" id="CLU_034992_2_0_1"/>
<dbReference type="InParanoid" id="P13114"/>
<dbReference type="OMA" id="HGWQDRM"/>
<dbReference type="OrthoDB" id="1500228at2759"/>
<dbReference type="PhylomeDB" id="P13114"/>
<dbReference type="BioCyc" id="ARA:AT5G13930-MONOMER"/>
<dbReference type="BioCyc" id="MetaCyc:AT5G13930-MONOMER"/>
<dbReference type="BRENDA" id="2.3.1.74">
    <property type="organism ID" value="399"/>
</dbReference>
<dbReference type="UniPathway" id="UPA00154"/>
<dbReference type="PRO" id="PR:P13114"/>
<dbReference type="Proteomes" id="UP000006548">
    <property type="component" value="Chromosome 5"/>
</dbReference>
<dbReference type="ExpressionAtlas" id="P13114">
    <property type="expression patterns" value="baseline and differential"/>
</dbReference>
<dbReference type="GO" id="GO:0005783">
    <property type="term" value="C:endoplasmic reticulum"/>
    <property type="evidence" value="ECO:0000314"/>
    <property type="project" value="TAIR"/>
</dbReference>
<dbReference type="GO" id="GO:0005634">
    <property type="term" value="C:nucleus"/>
    <property type="evidence" value="ECO:0000314"/>
    <property type="project" value="TAIR"/>
</dbReference>
<dbReference type="GO" id="GO:0009705">
    <property type="term" value="C:plant-type vacuole membrane"/>
    <property type="evidence" value="ECO:0000314"/>
    <property type="project" value="TAIR"/>
</dbReference>
<dbReference type="GO" id="GO:0016210">
    <property type="term" value="F:naringenin-chalcone synthase activity"/>
    <property type="evidence" value="ECO:0007669"/>
    <property type="project" value="UniProtKB-EC"/>
</dbReference>
<dbReference type="GO" id="GO:0009926">
    <property type="term" value="P:auxin polar transport"/>
    <property type="evidence" value="ECO:0000315"/>
    <property type="project" value="TAIR"/>
</dbReference>
<dbReference type="GO" id="GO:0009813">
    <property type="term" value="P:flavonoid biosynthetic process"/>
    <property type="evidence" value="ECO:0000315"/>
    <property type="project" value="TAIR"/>
</dbReference>
<dbReference type="GO" id="GO:0031540">
    <property type="term" value="P:regulation of anthocyanin biosynthetic process"/>
    <property type="evidence" value="ECO:0000270"/>
    <property type="project" value="TAIR"/>
</dbReference>
<dbReference type="GO" id="GO:0009733">
    <property type="term" value="P:response to auxin"/>
    <property type="evidence" value="ECO:0000270"/>
    <property type="project" value="TAIR"/>
</dbReference>
<dbReference type="GO" id="GO:0009629">
    <property type="term" value="P:response to gravity"/>
    <property type="evidence" value="ECO:0000315"/>
    <property type="project" value="TAIR"/>
</dbReference>
<dbReference type="GO" id="GO:0009753">
    <property type="term" value="P:response to jasmonic acid"/>
    <property type="evidence" value="ECO:0000270"/>
    <property type="project" value="TAIR"/>
</dbReference>
<dbReference type="GO" id="GO:0006979">
    <property type="term" value="P:response to oxidative stress"/>
    <property type="evidence" value="ECO:0000270"/>
    <property type="project" value="TAIR"/>
</dbReference>
<dbReference type="GO" id="GO:0010224">
    <property type="term" value="P:response to UV-B"/>
    <property type="evidence" value="ECO:0000315"/>
    <property type="project" value="TAIR"/>
</dbReference>
<dbReference type="GO" id="GO:0009611">
    <property type="term" value="P:response to wounding"/>
    <property type="evidence" value="ECO:0000270"/>
    <property type="project" value="TAIR"/>
</dbReference>
<dbReference type="CDD" id="cd00831">
    <property type="entry name" value="CHS_like"/>
    <property type="match status" value="1"/>
</dbReference>
<dbReference type="FunFam" id="3.40.47.10:FF:000014">
    <property type="entry name" value="Chalcone synthase 1"/>
    <property type="match status" value="1"/>
</dbReference>
<dbReference type="FunFam" id="3.40.47.10:FF:000025">
    <property type="entry name" value="Chalcone synthase 2"/>
    <property type="match status" value="1"/>
</dbReference>
<dbReference type="Gene3D" id="3.40.47.10">
    <property type="match status" value="2"/>
</dbReference>
<dbReference type="InterPro" id="IPR012328">
    <property type="entry name" value="Chalcone/stilbene_synt_C"/>
</dbReference>
<dbReference type="InterPro" id="IPR001099">
    <property type="entry name" value="Chalcone/stilbene_synt_N"/>
</dbReference>
<dbReference type="InterPro" id="IPR018088">
    <property type="entry name" value="Chalcone/stilbene_synthase_AS"/>
</dbReference>
<dbReference type="InterPro" id="IPR011141">
    <property type="entry name" value="Polyketide_synthase_type-III"/>
</dbReference>
<dbReference type="InterPro" id="IPR016039">
    <property type="entry name" value="Thiolase-like"/>
</dbReference>
<dbReference type="PANTHER" id="PTHR11877:SF14">
    <property type="entry name" value="CHALCONE SYNTHASE"/>
    <property type="match status" value="1"/>
</dbReference>
<dbReference type="PANTHER" id="PTHR11877">
    <property type="entry name" value="HYDROXYMETHYLGLUTARYL-COA SYNTHASE"/>
    <property type="match status" value="1"/>
</dbReference>
<dbReference type="Pfam" id="PF02797">
    <property type="entry name" value="Chal_sti_synt_C"/>
    <property type="match status" value="1"/>
</dbReference>
<dbReference type="Pfam" id="PF00195">
    <property type="entry name" value="Chal_sti_synt_N"/>
    <property type="match status" value="1"/>
</dbReference>
<dbReference type="PIRSF" id="PIRSF000451">
    <property type="entry name" value="PKS_III"/>
    <property type="match status" value="1"/>
</dbReference>
<dbReference type="SUPFAM" id="SSF53901">
    <property type="entry name" value="Thiolase-like"/>
    <property type="match status" value="2"/>
</dbReference>
<dbReference type="PROSITE" id="PS00441">
    <property type="entry name" value="CHALCONE_SYNTH"/>
    <property type="match status" value="1"/>
</dbReference>
<name>CHSY_ARATH</name>
<keyword id="KW-0002">3D-structure</keyword>
<keyword id="KW-0007">Acetylation</keyword>
<keyword id="KW-0012">Acyltransferase</keyword>
<keyword id="KW-0024">Alternative initiation</keyword>
<keyword id="KW-0284">Flavonoid biosynthesis</keyword>
<keyword id="KW-1185">Reference proteome</keyword>
<keyword id="KW-0808">Transferase</keyword>
<organism>
    <name type="scientific">Arabidopsis thaliana</name>
    <name type="common">Mouse-ear cress</name>
    <dbReference type="NCBI Taxonomy" id="3702"/>
    <lineage>
        <taxon>Eukaryota</taxon>
        <taxon>Viridiplantae</taxon>
        <taxon>Streptophyta</taxon>
        <taxon>Embryophyta</taxon>
        <taxon>Tracheophyta</taxon>
        <taxon>Spermatophyta</taxon>
        <taxon>Magnoliopsida</taxon>
        <taxon>eudicotyledons</taxon>
        <taxon>Gunneridae</taxon>
        <taxon>Pentapetalae</taxon>
        <taxon>rosids</taxon>
        <taxon>malvids</taxon>
        <taxon>Brassicales</taxon>
        <taxon>Brassicaceae</taxon>
        <taxon>Camelineae</taxon>
        <taxon>Arabidopsis</taxon>
    </lineage>
</organism>
<accession>P13114</accession>
<accession>Q43132</accession>
<accession>Q940L6</accession>
<accession>Q941R9</accession>
<proteinExistence type="evidence at protein level"/>